<name>PYRE_BUCA5</name>
<keyword id="KW-0328">Glycosyltransferase</keyword>
<keyword id="KW-0460">Magnesium</keyword>
<keyword id="KW-0665">Pyrimidine biosynthesis</keyword>
<keyword id="KW-0808">Transferase</keyword>
<evidence type="ECO:0000255" key="1">
    <source>
        <dbReference type="HAMAP-Rule" id="MF_01208"/>
    </source>
</evidence>
<gene>
    <name evidence="1" type="primary">pyrE</name>
    <name type="ordered locus">BUAP5A_552</name>
</gene>
<organism>
    <name type="scientific">Buchnera aphidicola subsp. Acyrthosiphon pisum (strain 5A)</name>
    <dbReference type="NCBI Taxonomy" id="563178"/>
    <lineage>
        <taxon>Bacteria</taxon>
        <taxon>Pseudomonadati</taxon>
        <taxon>Pseudomonadota</taxon>
        <taxon>Gammaproteobacteria</taxon>
        <taxon>Enterobacterales</taxon>
        <taxon>Erwiniaceae</taxon>
        <taxon>Buchnera</taxon>
    </lineage>
</organism>
<proteinExistence type="inferred from homology"/>
<reference key="1">
    <citation type="journal article" date="2009" name="Science">
        <title>The dynamics and time scale of ongoing genomic erosion in symbiotic bacteria.</title>
        <authorList>
            <person name="Moran N.A."/>
            <person name="McLaughlin H.J."/>
            <person name="Sorek R."/>
        </authorList>
    </citation>
    <scope>NUCLEOTIDE SEQUENCE [LARGE SCALE GENOMIC DNA]</scope>
    <source>
        <strain>5A</strain>
    </source>
</reference>
<comment type="function">
    <text evidence="1">Catalyzes the transfer of a ribosyl phosphate group from 5-phosphoribose 1-diphosphate to orotate, leading to the formation of orotidine monophosphate (OMP).</text>
</comment>
<comment type="catalytic activity">
    <reaction evidence="1">
        <text>orotidine 5'-phosphate + diphosphate = orotate + 5-phospho-alpha-D-ribose 1-diphosphate</text>
        <dbReference type="Rhea" id="RHEA:10380"/>
        <dbReference type="ChEBI" id="CHEBI:30839"/>
        <dbReference type="ChEBI" id="CHEBI:33019"/>
        <dbReference type="ChEBI" id="CHEBI:57538"/>
        <dbReference type="ChEBI" id="CHEBI:58017"/>
        <dbReference type="EC" id="2.4.2.10"/>
    </reaction>
</comment>
<comment type="cofactor">
    <cofactor evidence="1">
        <name>Mg(2+)</name>
        <dbReference type="ChEBI" id="CHEBI:18420"/>
    </cofactor>
</comment>
<comment type="pathway">
    <text evidence="1">Pyrimidine metabolism; UMP biosynthesis via de novo pathway; UMP from orotate: step 1/2.</text>
</comment>
<comment type="subunit">
    <text evidence="1">Homodimer.</text>
</comment>
<comment type="similarity">
    <text evidence="1">Belongs to the purine/pyrimidine phosphoribosyltransferase family. PyrE subfamily.</text>
</comment>
<dbReference type="EC" id="2.4.2.10" evidence="1"/>
<dbReference type="EMBL" id="CP001161">
    <property type="protein sequence ID" value="ACL30899.1"/>
    <property type="molecule type" value="Genomic_DNA"/>
</dbReference>
<dbReference type="RefSeq" id="WP_009874507.1">
    <property type="nucleotide sequence ID" value="NC_011833.1"/>
</dbReference>
<dbReference type="SMR" id="B8D8C3"/>
<dbReference type="KEGG" id="bap:BUAP5A_552"/>
<dbReference type="HOGENOM" id="CLU_074878_0_1_6"/>
<dbReference type="OrthoDB" id="9779060at2"/>
<dbReference type="UniPathway" id="UPA00070">
    <property type="reaction ID" value="UER00119"/>
</dbReference>
<dbReference type="Proteomes" id="UP000006904">
    <property type="component" value="Chromosome"/>
</dbReference>
<dbReference type="GO" id="GO:0005737">
    <property type="term" value="C:cytoplasm"/>
    <property type="evidence" value="ECO:0007669"/>
    <property type="project" value="TreeGrafter"/>
</dbReference>
<dbReference type="GO" id="GO:0000287">
    <property type="term" value="F:magnesium ion binding"/>
    <property type="evidence" value="ECO:0007669"/>
    <property type="project" value="UniProtKB-UniRule"/>
</dbReference>
<dbReference type="GO" id="GO:0004588">
    <property type="term" value="F:orotate phosphoribosyltransferase activity"/>
    <property type="evidence" value="ECO:0007669"/>
    <property type="project" value="UniProtKB-UniRule"/>
</dbReference>
<dbReference type="GO" id="GO:0006207">
    <property type="term" value="P:'de novo' pyrimidine nucleobase biosynthetic process"/>
    <property type="evidence" value="ECO:0007669"/>
    <property type="project" value="TreeGrafter"/>
</dbReference>
<dbReference type="GO" id="GO:0044205">
    <property type="term" value="P:'de novo' UMP biosynthetic process"/>
    <property type="evidence" value="ECO:0007669"/>
    <property type="project" value="UniProtKB-UniRule"/>
</dbReference>
<dbReference type="GO" id="GO:0046132">
    <property type="term" value="P:pyrimidine ribonucleoside biosynthetic process"/>
    <property type="evidence" value="ECO:0007669"/>
    <property type="project" value="TreeGrafter"/>
</dbReference>
<dbReference type="CDD" id="cd06223">
    <property type="entry name" value="PRTases_typeI"/>
    <property type="match status" value="1"/>
</dbReference>
<dbReference type="FunFam" id="3.40.50.2020:FF:000008">
    <property type="entry name" value="Orotate phosphoribosyltransferase"/>
    <property type="match status" value="1"/>
</dbReference>
<dbReference type="Gene3D" id="3.40.50.2020">
    <property type="match status" value="1"/>
</dbReference>
<dbReference type="HAMAP" id="MF_01208">
    <property type="entry name" value="PyrE"/>
    <property type="match status" value="1"/>
</dbReference>
<dbReference type="InterPro" id="IPR023031">
    <property type="entry name" value="OPRT"/>
</dbReference>
<dbReference type="InterPro" id="IPR004467">
    <property type="entry name" value="Or_phspho_trans_dom"/>
</dbReference>
<dbReference type="InterPro" id="IPR000836">
    <property type="entry name" value="PRibTrfase_dom"/>
</dbReference>
<dbReference type="InterPro" id="IPR029057">
    <property type="entry name" value="PRTase-like"/>
</dbReference>
<dbReference type="NCBIfam" id="TIGR00336">
    <property type="entry name" value="pyrE"/>
    <property type="match status" value="1"/>
</dbReference>
<dbReference type="PANTHER" id="PTHR46683">
    <property type="entry name" value="OROTATE PHOSPHORIBOSYLTRANSFERASE 1-RELATED"/>
    <property type="match status" value="1"/>
</dbReference>
<dbReference type="PANTHER" id="PTHR46683:SF1">
    <property type="entry name" value="OROTATE PHOSPHORIBOSYLTRANSFERASE 1-RELATED"/>
    <property type="match status" value="1"/>
</dbReference>
<dbReference type="Pfam" id="PF00156">
    <property type="entry name" value="Pribosyltran"/>
    <property type="match status" value="1"/>
</dbReference>
<dbReference type="SUPFAM" id="SSF53271">
    <property type="entry name" value="PRTase-like"/>
    <property type="match status" value="1"/>
</dbReference>
<dbReference type="PROSITE" id="PS00103">
    <property type="entry name" value="PUR_PYR_PR_TRANSFER"/>
    <property type="match status" value="1"/>
</dbReference>
<accession>B8D8C3</accession>
<feature type="chain" id="PRO_1000164674" description="Orotate phosphoribosyltransferase">
    <location>
        <begin position="1"/>
        <end position="213"/>
    </location>
</feature>
<feature type="binding site" description="in other chain" evidence="1">
    <location>
        <position position="25"/>
    </location>
    <ligand>
        <name>5-phospho-alpha-D-ribose 1-diphosphate</name>
        <dbReference type="ChEBI" id="CHEBI:58017"/>
        <note>ligand shared between dimeric partners</note>
    </ligand>
</feature>
<feature type="binding site" evidence="1">
    <location>
        <begin position="33"/>
        <end position="34"/>
    </location>
    <ligand>
        <name>orotate</name>
        <dbReference type="ChEBI" id="CHEBI:30839"/>
    </ligand>
</feature>
<feature type="binding site" description="in other chain" evidence="1">
    <location>
        <begin position="71"/>
        <end position="72"/>
    </location>
    <ligand>
        <name>5-phospho-alpha-D-ribose 1-diphosphate</name>
        <dbReference type="ChEBI" id="CHEBI:58017"/>
        <note>ligand shared between dimeric partners</note>
    </ligand>
</feature>
<feature type="binding site" evidence="1">
    <location>
        <position position="98"/>
    </location>
    <ligand>
        <name>5-phospho-alpha-D-ribose 1-diphosphate</name>
        <dbReference type="ChEBI" id="CHEBI:58017"/>
        <note>ligand shared between dimeric partners</note>
    </ligand>
</feature>
<feature type="binding site" description="in other chain" evidence="1">
    <location>
        <position position="99"/>
    </location>
    <ligand>
        <name>5-phospho-alpha-D-ribose 1-diphosphate</name>
        <dbReference type="ChEBI" id="CHEBI:58017"/>
        <note>ligand shared between dimeric partners</note>
    </ligand>
</feature>
<feature type="binding site" evidence="1">
    <location>
        <position position="102"/>
    </location>
    <ligand>
        <name>5-phospho-alpha-D-ribose 1-diphosphate</name>
        <dbReference type="ChEBI" id="CHEBI:58017"/>
        <note>ligand shared between dimeric partners</note>
    </ligand>
</feature>
<feature type="binding site" evidence="1">
    <location>
        <position position="104"/>
    </location>
    <ligand>
        <name>5-phospho-alpha-D-ribose 1-diphosphate</name>
        <dbReference type="ChEBI" id="CHEBI:58017"/>
        <note>ligand shared between dimeric partners</note>
    </ligand>
</feature>
<feature type="binding site" description="in other chain" evidence="1">
    <location>
        <begin position="124"/>
        <end position="132"/>
    </location>
    <ligand>
        <name>5-phospho-alpha-D-ribose 1-diphosphate</name>
        <dbReference type="ChEBI" id="CHEBI:58017"/>
        <note>ligand shared between dimeric partners</note>
    </ligand>
</feature>
<feature type="binding site" evidence="1">
    <location>
        <position position="128"/>
    </location>
    <ligand>
        <name>orotate</name>
        <dbReference type="ChEBI" id="CHEBI:30839"/>
    </ligand>
</feature>
<feature type="binding site" evidence="1">
    <location>
        <position position="156"/>
    </location>
    <ligand>
        <name>orotate</name>
        <dbReference type="ChEBI" id="CHEBI:30839"/>
    </ligand>
</feature>
<sequence length="213" mass="24610">MDWKKEFIDFSFKKKVLKFGVFQLKSGRISPYFFNSGLLSTGIDIIKIGLFYARSIIDSKNKFDVLFGPAYKGIPIAVATSIALKNHYNLNVPYSFNRKEYKEHGEKGDLIGSTIYKKRVIILDDVITSGTAIHHSIKIIEKQEASISSIFVLLDRKEKGIRKLSTINHFRNQKSYKIISIITIDDLIEYVLEDKKLKEHIPQLIKYREKYGI</sequence>
<protein>
    <recommendedName>
        <fullName evidence="1">Orotate phosphoribosyltransferase</fullName>
        <shortName evidence="1">OPRT</shortName>
        <shortName evidence="1">OPRTase</shortName>
        <ecNumber evidence="1">2.4.2.10</ecNumber>
    </recommendedName>
</protein>